<reference key="1">
    <citation type="journal article" date="2012" name="MBio">
        <title>Comparative genome analysis of Trichophyton rubrum and related dermatophytes reveals candidate genes involved in infection.</title>
        <authorList>
            <person name="Martinez D.A."/>
            <person name="Oliver B.G."/>
            <person name="Graeser Y."/>
            <person name="Goldberg J.M."/>
            <person name="Li W."/>
            <person name="Martinez-Rossi N.M."/>
            <person name="Monod M."/>
            <person name="Shelest E."/>
            <person name="Barton R.C."/>
            <person name="Birch E."/>
            <person name="Brakhage A.A."/>
            <person name="Chen Z."/>
            <person name="Gurr S.J."/>
            <person name="Heiman D."/>
            <person name="Heitman J."/>
            <person name="Kosti I."/>
            <person name="Rossi A."/>
            <person name="Saif S."/>
            <person name="Samalova M."/>
            <person name="Saunders C.W."/>
            <person name="Shea T."/>
            <person name="Summerbell R.C."/>
            <person name="Xu J."/>
            <person name="Young S."/>
            <person name="Zeng Q."/>
            <person name="Birren B.W."/>
            <person name="Cuomo C.A."/>
            <person name="White T.C."/>
        </authorList>
    </citation>
    <scope>NUCLEOTIDE SEQUENCE [LARGE SCALE GENOMIC DNA]</scope>
    <source>
        <strain>ATCC MYA-4605 / CBS 113480</strain>
    </source>
</reference>
<name>MEP1_ARTOC</name>
<organism>
    <name type="scientific">Arthroderma otae (strain ATCC MYA-4605 / CBS 113480)</name>
    <name type="common">Microsporum canis</name>
    <dbReference type="NCBI Taxonomy" id="554155"/>
    <lineage>
        <taxon>Eukaryota</taxon>
        <taxon>Fungi</taxon>
        <taxon>Dikarya</taxon>
        <taxon>Ascomycota</taxon>
        <taxon>Pezizomycotina</taxon>
        <taxon>Eurotiomycetes</taxon>
        <taxon>Eurotiomycetidae</taxon>
        <taxon>Onygenales</taxon>
        <taxon>Arthrodermataceae</taxon>
        <taxon>Microsporum</taxon>
    </lineage>
</organism>
<feature type="signal peptide" evidence="2">
    <location>
        <begin position="1"/>
        <end position="19"/>
    </location>
</feature>
<feature type="propeptide" id="PRO_0000384077" evidence="1">
    <location>
        <begin position="20"/>
        <end position="250"/>
    </location>
</feature>
<feature type="chain" id="PRO_0000384078" description="Extracellular metalloproteinase 1">
    <location>
        <begin position="251"/>
        <end position="639"/>
    </location>
</feature>
<feature type="active site" evidence="3">
    <location>
        <position position="435"/>
    </location>
</feature>
<feature type="binding site" evidence="3">
    <location>
        <position position="434"/>
    </location>
    <ligand>
        <name>Zn(2+)</name>
        <dbReference type="ChEBI" id="CHEBI:29105"/>
        <note>catalytic</note>
    </ligand>
</feature>
<feature type="binding site" evidence="3">
    <location>
        <position position="438"/>
    </location>
    <ligand>
        <name>Zn(2+)</name>
        <dbReference type="ChEBI" id="CHEBI:29105"/>
        <note>catalytic</note>
    </ligand>
</feature>
<feature type="glycosylation site" description="N-linked (GlcNAc...) asparagine" evidence="2">
    <location>
        <position position="291"/>
    </location>
</feature>
<feature type="glycosylation site" description="N-linked (GlcNAc...) asparagine" evidence="2">
    <location>
        <position position="598"/>
    </location>
</feature>
<evidence type="ECO:0000250" key="1"/>
<evidence type="ECO:0000255" key="2"/>
<evidence type="ECO:0000255" key="3">
    <source>
        <dbReference type="PROSITE-ProRule" id="PRU10095"/>
    </source>
</evidence>
<evidence type="ECO:0000305" key="4"/>
<keyword id="KW-0325">Glycoprotein</keyword>
<keyword id="KW-0378">Hydrolase</keyword>
<keyword id="KW-0479">Metal-binding</keyword>
<keyword id="KW-0482">Metalloprotease</keyword>
<keyword id="KW-0645">Protease</keyword>
<keyword id="KW-1185">Reference proteome</keyword>
<keyword id="KW-0964">Secreted</keyword>
<keyword id="KW-0732">Signal</keyword>
<keyword id="KW-0843">Virulence</keyword>
<keyword id="KW-0862">Zinc</keyword>
<keyword id="KW-0865">Zymogen</keyword>
<comment type="function">
    <text evidence="1">Secreted metalloproteinase probably acting as a virulence factor.</text>
</comment>
<comment type="cofactor">
    <cofactor evidence="1">
        <name>Zn(2+)</name>
        <dbReference type="ChEBI" id="CHEBI:29105"/>
    </cofactor>
    <text evidence="1">Binds 1 zinc ion per subunit.</text>
</comment>
<comment type="subcellular location">
    <subcellularLocation>
        <location evidence="1">Secreted</location>
    </subcellularLocation>
</comment>
<comment type="similarity">
    <text evidence="4">Belongs to the peptidase M36 family.</text>
</comment>
<comment type="sequence caution" evidence="4">
    <conflict type="erroneous gene model prediction">
        <sequence resource="EMBL-CDS" id="EEQ34596"/>
    </conflict>
</comment>
<gene>
    <name type="primary">MEP1</name>
    <name type="ORF">MCYG_07415</name>
</gene>
<sequence>MHGLLLAAGLISLPLHVLAHPQPSSTSLAGRAVDLNEYRIGHRSSYTSNDEMMKQPSIASFRAGTYVEVATEMVKQTMPNMEFRLVDDHYIGQSGIGHVRFRQTMHGIDIDNSDFNVNAYDNFYQIGQDGKVLSHGNSFYTGPAPESSPVQKRDFSDPMQALHGVRKALNLPIKAEGATVENMSEHKVMFKGTSGALSDPTAKLCYMAKEDGSLALTWRVETDIGDNWLLSYMDAKDTGKVHNVVDYVAHATFQVYKWGLADPTEGNREILTNPWNLQTSPLTWLADGQNNFTATRGNNAIAQYNPDGGNDYENNYRPSPKNLKFEYPYSANMDPPKTYIDASVTQLFYTSNVCHDLYYMLGFNEKAGNFQVNNRGQGGKGNDYVILNAQDGSGTNNANFATPPDGQPGRMRAYIWTRANPPRDASFEAGTIIHEYTHGLSNRLCGGPANSRCLNAIESGGMGEGWGDFYATAVRLKPKDTRKTNYVKGGWVNNSPKGVRMYPYSTDMSVNPLVYTSNNQLNEVHAIGTVWATMLYELLWNLIDKHGKNDGPVPIFKNGIPSDGKYLAMKIVMDGMAIQPCNPNFVQARDAILDADKNLTKASNKCEIWKAFAKRGLGVGAKFDPKNRIGSNEVPKECK</sequence>
<protein>
    <recommendedName>
        <fullName>Extracellular metalloproteinase 1</fullName>
        <ecNumber>3.4.24.-</ecNumber>
    </recommendedName>
    <alternativeName>
        <fullName>Fungalysin MEP1</fullName>
    </alternativeName>
</protein>
<dbReference type="EC" id="3.4.24.-"/>
<dbReference type="EMBL" id="DS995707">
    <property type="protein sequence ID" value="EEQ34596.1"/>
    <property type="status" value="ALT_SEQ"/>
    <property type="molecule type" value="Genomic_DNA"/>
</dbReference>
<dbReference type="RefSeq" id="XP_002843632.1">
    <property type="nucleotide sequence ID" value="XM_002843586.1"/>
</dbReference>
<dbReference type="SMR" id="C5FYJ8"/>
<dbReference type="MEROPS" id="M36.001"/>
<dbReference type="GlyCosmos" id="C5FYJ8">
    <property type="glycosylation" value="2 sites, No reported glycans"/>
</dbReference>
<dbReference type="GeneID" id="9230808"/>
<dbReference type="eggNOG" id="ENOG502QTDC">
    <property type="taxonomic scope" value="Eukaryota"/>
</dbReference>
<dbReference type="HOGENOM" id="CLU_012703_3_0_1"/>
<dbReference type="OrthoDB" id="3227768at2759"/>
<dbReference type="Proteomes" id="UP000002035">
    <property type="component" value="Unassembled WGS sequence"/>
</dbReference>
<dbReference type="GO" id="GO:0005576">
    <property type="term" value="C:extracellular region"/>
    <property type="evidence" value="ECO:0007669"/>
    <property type="project" value="UniProtKB-SubCell"/>
</dbReference>
<dbReference type="GO" id="GO:0004222">
    <property type="term" value="F:metalloendopeptidase activity"/>
    <property type="evidence" value="ECO:0007669"/>
    <property type="project" value="InterPro"/>
</dbReference>
<dbReference type="GO" id="GO:0008270">
    <property type="term" value="F:zinc ion binding"/>
    <property type="evidence" value="ECO:0007669"/>
    <property type="project" value="InterPro"/>
</dbReference>
<dbReference type="GO" id="GO:0006508">
    <property type="term" value="P:proteolysis"/>
    <property type="evidence" value="ECO:0007669"/>
    <property type="project" value="UniProtKB-KW"/>
</dbReference>
<dbReference type="CDD" id="cd09596">
    <property type="entry name" value="M36"/>
    <property type="match status" value="1"/>
</dbReference>
<dbReference type="Gene3D" id="3.10.170.10">
    <property type="match status" value="1"/>
</dbReference>
<dbReference type="Gene3D" id="1.10.390.10">
    <property type="entry name" value="Neutral Protease Domain 2"/>
    <property type="match status" value="1"/>
</dbReference>
<dbReference type="InterPro" id="IPR011096">
    <property type="entry name" value="FTP_domain"/>
</dbReference>
<dbReference type="InterPro" id="IPR050371">
    <property type="entry name" value="Fungal_virulence_M36"/>
</dbReference>
<dbReference type="InterPro" id="IPR001842">
    <property type="entry name" value="Peptidase_M36"/>
</dbReference>
<dbReference type="InterPro" id="IPR027268">
    <property type="entry name" value="Peptidase_M4/M1_CTD_sf"/>
</dbReference>
<dbReference type="PANTHER" id="PTHR33478">
    <property type="entry name" value="EXTRACELLULAR METALLOPROTEINASE MEP"/>
    <property type="match status" value="1"/>
</dbReference>
<dbReference type="PANTHER" id="PTHR33478:SF1">
    <property type="entry name" value="EXTRACELLULAR METALLOPROTEINASE MEP"/>
    <property type="match status" value="1"/>
</dbReference>
<dbReference type="Pfam" id="PF07504">
    <property type="entry name" value="FTP"/>
    <property type="match status" value="1"/>
</dbReference>
<dbReference type="Pfam" id="PF02128">
    <property type="entry name" value="Peptidase_M36"/>
    <property type="match status" value="1"/>
</dbReference>
<dbReference type="PRINTS" id="PR00999">
    <property type="entry name" value="FUNGALYSIN"/>
</dbReference>
<dbReference type="SUPFAM" id="SSF55486">
    <property type="entry name" value="Metalloproteases ('zincins'), catalytic domain"/>
    <property type="match status" value="1"/>
</dbReference>
<dbReference type="PROSITE" id="PS00142">
    <property type="entry name" value="ZINC_PROTEASE"/>
    <property type="match status" value="1"/>
</dbReference>
<proteinExistence type="inferred from homology"/>
<accession>C5FYJ8</accession>